<sequence length="92" mass="10125">MARVTVEDAVEQIGNRFDMILVAARRARQIAVQGKDPMVEEMNDKPTVIALREIELGLVNAHTLDADERQTVREREAAEIAAVAAIAEGRSL</sequence>
<organism>
    <name type="scientific">Shewanella oneidensis (strain ATCC 700550 / JCM 31522 / CIP 106686 / LMG 19005 / NCIMB 14063 / MR-1)</name>
    <dbReference type="NCBI Taxonomy" id="211586"/>
    <lineage>
        <taxon>Bacteria</taxon>
        <taxon>Pseudomonadati</taxon>
        <taxon>Pseudomonadota</taxon>
        <taxon>Gammaproteobacteria</taxon>
        <taxon>Alteromonadales</taxon>
        <taxon>Shewanellaceae</taxon>
        <taxon>Shewanella</taxon>
    </lineage>
</organism>
<keyword id="KW-0240">DNA-directed RNA polymerase</keyword>
<keyword id="KW-0548">Nucleotidyltransferase</keyword>
<keyword id="KW-1185">Reference proteome</keyword>
<keyword id="KW-0804">Transcription</keyword>
<keyword id="KW-0808">Transferase</keyword>
<dbReference type="EC" id="2.7.7.6" evidence="1"/>
<dbReference type="EMBL" id="AE014299">
    <property type="protein sequence ID" value="AAN53445.1"/>
    <property type="molecule type" value="Genomic_DNA"/>
</dbReference>
<dbReference type="RefSeq" id="NP_716000.1">
    <property type="nucleotide sequence ID" value="NC_004347.2"/>
</dbReference>
<dbReference type="RefSeq" id="WP_007651394.1">
    <property type="nucleotide sequence ID" value="NZ_CP053946.1"/>
</dbReference>
<dbReference type="SMR" id="Q8EJU7"/>
<dbReference type="STRING" id="211586.SO_0360"/>
<dbReference type="PaxDb" id="211586-SO_0360"/>
<dbReference type="GeneID" id="67445125"/>
<dbReference type="KEGG" id="son:SO_0360"/>
<dbReference type="PATRIC" id="fig|211586.12.peg.351"/>
<dbReference type="eggNOG" id="COG1758">
    <property type="taxonomic scope" value="Bacteria"/>
</dbReference>
<dbReference type="HOGENOM" id="CLU_125406_5_3_6"/>
<dbReference type="OrthoDB" id="9796300at2"/>
<dbReference type="PhylomeDB" id="Q8EJU7"/>
<dbReference type="BioCyc" id="SONE211586:G1GMP-345-MONOMER"/>
<dbReference type="Proteomes" id="UP000008186">
    <property type="component" value="Chromosome"/>
</dbReference>
<dbReference type="GO" id="GO:0000345">
    <property type="term" value="C:cytosolic DNA-directed RNA polymerase complex"/>
    <property type="evidence" value="ECO:0000318"/>
    <property type="project" value="GO_Central"/>
</dbReference>
<dbReference type="GO" id="GO:0001000">
    <property type="term" value="F:bacterial-type RNA polymerase core enzyme binding"/>
    <property type="evidence" value="ECO:0000318"/>
    <property type="project" value="GO_Central"/>
</dbReference>
<dbReference type="GO" id="GO:0003677">
    <property type="term" value="F:DNA binding"/>
    <property type="evidence" value="ECO:0007669"/>
    <property type="project" value="UniProtKB-UniRule"/>
</dbReference>
<dbReference type="GO" id="GO:0003899">
    <property type="term" value="F:DNA-directed RNA polymerase activity"/>
    <property type="evidence" value="ECO:0007669"/>
    <property type="project" value="UniProtKB-UniRule"/>
</dbReference>
<dbReference type="GO" id="GO:0006352">
    <property type="term" value="P:DNA-templated transcription initiation"/>
    <property type="evidence" value="ECO:0000318"/>
    <property type="project" value="GO_Central"/>
</dbReference>
<dbReference type="Gene3D" id="3.90.940.10">
    <property type="match status" value="1"/>
</dbReference>
<dbReference type="HAMAP" id="MF_00366">
    <property type="entry name" value="RNApol_bact_RpoZ"/>
    <property type="match status" value="1"/>
</dbReference>
<dbReference type="InterPro" id="IPR003716">
    <property type="entry name" value="DNA-dir_RNA_pol_omega"/>
</dbReference>
<dbReference type="InterPro" id="IPR006110">
    <property type="entry name" value="Pol_omega/Rpo6/RPB6"/>
</dbReference>
<dbReference type="InterPro" id="IPR036161">
    <property type="entry name" value="RPB6/omega-like_sf"/>
</dbReference>
<dbReference type="NCBIfam" id="TIGR00690">
    <property type="entry name" value="rpoZ"/>
    <property type="match status" value="1"/>
</dbReference>
<dbReference type="PANTHER" id="PTHR34476">
    <property type="entry name" value="DNA-DIRECTED RNA POLYMERASE SUBUNIT OMEGA"/>
    <property type="match status" value="1"/>
</dbReference>
<dbReference type="PANTHER" id="PTHR34476:SF1">
    <property type="entry name" value="DNA-DIRECTED RNA POLYMERASE SUBUNIT OMEGA"/>
    <property type="match status" value="1"/>
</dbReference>
<dbReference type="Pfam" id="PF01192">
    <property type="entry name" value="RNA_pol_Rpb6"/>
    <property type="match status" value="1"/>
</dbReference>
<dbReference type="SMART" id="SM01409">
    <property type="entry name" value="RNA_pol_Rpb6"/>
    <property type="match status" value="1"/>
</dbReference>
<dbReference type="SUPFAM" id="SSF63562">
    <property type="entry name" value="RPB6/omega subunit-like"/>
    <property type="match status" value="1"/>
</dbReference>
<name>RPOZ_SHEON</name>
<accession>Q8EJU7</accession>
<feature type="chain" id="PRO_0000128974" description="DNA-directed RNA polymerase subunit omega">
    <location>
        <begin position="1"/>
        <end position="92"/>
    </location>
</feature>
<proteinExistence type="inferred from homology"/>
<reference key="1">
    <citation type="journal article" date="2002" name="Nat. Biotechnol.">
        <title>Genome sequence of the dissimilatory metal ion-reducing bacterium Shewanella oneidensis.</title>
        <authorList>
            <person name="Heidelberg J.F."/>
            <person name="Paulsen I.T."/>
            <person name="Nelson K.E."/>
            <person name="Gaidos E.J."/>
            <person name="Nelson W.C."/>
            <person name="Read T.D."/>
            <person name="Eisen J.A."/>
            <person name="Seshadri R."/>
            <person name="Ward N.L."/>
            <person name="Methe B.A."/>
            <person name="Clayton R.A."/>
            <person name="Meyer T."/>
            <person name="Tsapin A."/>
            <person name="Scott J."/>
            <person name="Beanan M.J."/>
            <person name="Brinkac L.M."/>
            <person name="Daugherty S.C."/>
            <person name="DeBoy R.T."/>
            <person name="Dodson R.J."/>
            <person name="Durkin A.S."/>
            <person name="Haft D.H."/>
            <person name="Kolonay J.F."/>
            <person name="Madupu R."/>
            <person name="Peterson J.D."/>
            <person name="Umayam L.A."/>
            <person name="White O."/>
            <person name="Wolf A.M."/>
            <person name="Vamathevan J.J."/>
            <person name="Weidman J.F."/>
            <person name="Impraim M."/>
            <person name="Lee K."/>
            <person name="Berry K.J."/>
            <person name="Lee C."/>
            <person name="Mueller J."/>
            <person name="Khouri H.M."/>
            <person name="Gill J."/>
            <person name="Utterback T.R."/>
            <person name="McDonald L.A."/>
            <person name="Feldblyum T.V."/>
            <person name="Smith H.O."/>
            <person name="Venter J.C."/>
            <person name="Nealson K.H."/>
            <person name="Fraser C.M."/>
        </authorList>
    </citation>
    <scope>NUCLEOTIDE SEQUENCE [LARGE SCALE GENOMIC DNA]</scope>
    <source>
        <strain>ATCC 700550 / JCM 31522 / CIP 106686 / LMG 19005 / NCIMB 14063 / MR-1</strain>
    </source>
</reference>
<comment type="function">
    <text evidence="1">Promotes RNA polymerase assembly. Latches the N- and C-terminal regions of the beta' subunit thereby facilitating its interaction with the beta and alpha subunits.</text>
</comment>
<comment type="catalytic activity">
    <reaction evidence="1">
        <text>RNA(n) + a ribonucleoside 5'-triphosphate = RNA(n+1) + diphosphate</text>
        <dbReference type="Rhea" id="RHEA:21248"/>
        <dbReference type="Rhea" id="RHEA-COMP:14527"/>
        <dbReference type="Rhea" id="RHEA-COMP:17342"/>
        <dbReference type="ChEBI" id="CHEBI:33019"/>
        <dbReference type="ChEBI" id="CHEBI:61557"/>
        <dbReference type="ChEBI" id="CHEBI:140395"/>
        <dbReference type="EC" id="2.7.7.6"/>
    </reaction>
</comment>
<comment type="subunit">
    <text evidence="1">The RNAP catalytic core consists of 2 alpha, 1 beta, 1 beta' and 1 omega subunit. When a sigma factor is associated with the core the holoenzyme is formed, which can initiate transcription.</text>
</comment>
<comment type="similarity">
    <text evidence="1">Belongs to the RNA polymerase subunit omega family.</text>
</comment>
<gene>
    <name evidence="1" type="primary">rpoZ</name>
    <name type="ordered locus">SO_0360</name>
</gene>
<protein>
    <recommendedName>
        <fullName evidence="1">DNA-directed RNA polymerase subunit omega</fullName>
        <shortName evidence="1">RNAP omega subunit</shortName>
        <ecNumber evidence="1">2.7.7.6</ecNumber>
    </recommendedName>
    <alternativeName>
        <fullName evidence="1">RNA polymerase omega subunit</fullName>
    </alternativeName>
    <alternativeName>
        <fullName evidence="1">Transcriptase subunit omega</fullName>
    </alternativeName>
</protein>
<evidence type="ECO:0000255" key="1">
    <source>
        <dbReference type="HAMAP-Rule" id="MF_00366"/>
    </source>
</evidence>